<gene>
    <name type="primary">MT-CYB</name>
    <name type="synonym">COB</name>
    <name type="synonym">CYTB</name>
    <name type="synonym">MTCYB</name>
</gene>
<protein>
    <recommendedName>
        <fullName>Cytochrome b</fullName>
    </recommendedName>
    <alternativeName>
        <fullName>Complex III subunit 3</fullName>
    </alternativeName>
    <alternativeName>
        <fullName>Complex III subunit III</fullName>
    </alternativeName>
    <alternativeName>
        <fullName>Cytochrome b-c1 complex subunit 3</fullName>
    </alternativeName>
    <alternativeName>
        <fullName>Ubiquinol-cytochrome-c reductase complex cytochrome b subunit</fullName>
    </alternativeName>
</protein>
<keyword id="KW-0249">Electron transport</keyword>
<keyword id="KW-0349">Heme</keyword>
<keyword id="KW-0408">Iron</keyword>
<keyword id="KW-0472">Membrane</keyword>
<keyword id="KW-0479">Metal-binding</keyword>
<keyword id="KW-0496">Mitochondrion</keyword>
<keyword id="KW-0999">Mitochondrion inner membrane</keyword>
<keyword id="KW-0679">Respiratory chain</keyword>
<keyword id="KW-0812">Transmembrane</keyword>
<keyword id="KW-1133">Transmembrane helix</keyword>
<keyword id="KW-0813">Transport</keyword>
<keyword id="KW-0830">Ubiquinone</keyword>
<accession>Q1XIM1</accession>
<dbReference type="EMBL" id="AB175109">
    <property type="protein sequence ID" value="BAE92674.1"/>
    <property type="molecule type" value="Genomic_DNA"/>
</dbReference>
<dbReference type="EMBL" id="AB175110">
    <property type="protein sequence ID" value="BAE92675.1"/>
    <property type="molecule type" value="Genomic_DNA"/>
</dbReference>
<dbReference type="SMR" id="Q1XIM1"/>
<dbReference type="GO" id="GO:0005743">
    <property type="term" value="C:mitochondrial inner membrane"/>
    <property type="evidence" value="ECO:0007669"/>
    <property type="project" value="UniProtKB-SubCell"/>
</dbReference>
<dbReference type="GO" id="GO:0045275">
    <property type="term" value="C:respiratory chain complex III"/>
    <property type="evidence" value="ECO:0007669"/>
    <property type="project" value="InterPro"/>
</dbReference>
<dbReference type="GO" id="GO:0046872">
    <property type="term" value="F:metal ion binding"/>
    <property type="evidence" value="ECO:0007669"/>
    <property type="project" value="UniProtKB-KW"/>
</dbReference>
<dbReference type="GO" id="GO:0008121">
    <property type="term" value="F:ubiquinol-cytochrome-c reductase activity"/>
    <property type="evidence" value="ECO:0007669"/>
    <property type="project" value="InterPro"/>
</dbReference>
<dbReference type="GO" id="GO:0006122">
    <property type="term" value="P:mitochondrial electron transport, ubiquinol to cytochrome c"/>
    <property type="evidence" value="ECO:0007669"/>
    <property type="project" value="TreeGrafter"/>
</dbReference>
<dbReference type="CDD" id="cd00290">
    <property type="entry name" value="cytochrome_b_C"/>
    <property type="match status" value="1"/>
</dbReference>
<dbReference type="CDD" id="cd00284">
    <property type="entry name" value="Cytochrome_b_N"/>
    <property type="match status" value="1"/>
</dbReference>
<dbReference type="FunFam" id="1.20.810.10:FF:000002">
    <property type="entry name" value="Cytochrome b"/>
    <property type="match status" value="1"/>
</dbReference>
<dbReference type="Gene3D" id="1.20.810.10">
    <property type="entry name" value="Cytochrome Bc1 Complex, Chain C"/>
    <property type="match status" value="1"/>
</dbReference>
<dbReference type="InterPro" id="IPR005798">
    <property type="entry name" value="Cyt_b/b6_C"/>
</dbReference>
<dbReference type="InterPro" id="IPR036150">
    <property type="entry name" value="Cyt_b/b6_C_sf"/>
</dbReference>
<dbReference type="InterPro" id="IPR005797">
    <property type="entry name" value="Cyt_b/b6_N"/>
</dbReference>
<dbReference type="InterPro" id="IPR027387">
    <property type="entry name" value="Cytb/b6-like_sf"/>
</dbReference>
<dbReference type="InterPro" id="IPR030689">
    <property type="entry name" value="Cytochrome_b"/>
</dbReference>
<dbReference type="InterPro" id="IPR048260">
    <property type="entry name" value="Cytochrome_b_C_euk/bac"/>
</dbReference>
<dbReference type="InterPro" id="IPR048259">
    <property type="entry name" value="Cytochrome_b_N_euk/bac"/>
</dbReference>
<dbReference type="InterPro" id="IPR016174">
    <property type="entry name" value="Di-haem_cyt_TM"/>
</dbReference>
<dbReference type="PANTHER" id="PTHR19271">
    <property type="entry name" value="CYTOCHROME B"/>
    <property type="match status" value="1"/>
</dbReference>
<dbReference type="PANTHER" id="PTHR19271:SF16">
    <property type="entry name" value="CYTOCHROME B"/>
    <property type="match status" value="1"/>
</dbReference>
<dbReference type="Pfam" id="PF00032">
    <property type="entry name" value="Cytochrom_B_C"/>
    <property type="match status" value="1"/>
</dbReference>
<dbReference type="Pfam" id="PF00033">
    <property type="entry name" value="Cytochrome_B"/>
    <property type="match status" value="1"/>
</dbReference>
<dbReference type="PIRSF" id="PIRSF038885">
    <property type="entry name" value="COB"/>
    <property type="match status" value="1"/>
</dbReference>
<dbReference type="SUPFAM" id="SSF81648">
    <property type="entry name" value="a domain/subunit of cytochrome bc1 complex (Ubiquinol-cytochrome c reductase)"/>
    <property type="match status" value="1"/>
</dbReference>
<dbReference type="SUPFAM" id="SSF81342">
    <property type="entry name" value="Transmembrane di-heme cytochromes"/>
    <property type="match status" value="1"/>
</dbReference>
<dbReference type="PROSITE" id="PS51003">
    <property type="entry name" value="CYTB_CTER"/>
    <property type="match status" value="1"/>
</dbReference>
<dbReference type="PROSITE" id="PS51002">
    <property type="entry name" value="CYTB_NTER"/>
    <property type="match status" value="1"/>
</dbReference>
<proteinExistence type="inferred from homology"/>
<geneLocation type="mitochondrion"/>
<reference key="1">
    <citation type="submission" date="2004-03" db="EMBL/GenBank/DDBJ databases">
        <title>Molecular phylogenetics of the Soricidae (Insectivora, Mammalia) based on mitochondrial cytochrome b gene sequences.</title>
        <authorList>
            <person name="Ohdachi S.D."/>
            <person name="Iwasa M.A."/>
            <person name="Abe H."/>
            <person name="Vogel P."/>
            <person name="Oshida T."/>
            <person name="Lin L.K."/>
            <person name="Hasegawa M."/>
        </authorList>
    </citation>
    <scope>NUCLEOTIDE SEQUENCE [GENOMIC DNA]</scope>
    <source>
        <tissue>Foot</tissue>
    </source>
</reference>
<comment type="function">
    <text evidence="2">Component of the ubiquinol-cytochrome c reductase complex (complex III or cytochrome b-c1 complex) that is part of the mitochondrial respiratory chain. The b-c1 complex mediates electron transfer from ubiquinol to cytochrome c. Contributes to the generation of a proton gradient across the mitochondrial membrane that is then used for ATP synthesis.</text>
</comment>
<comment type="cofactor">
    <cofactor evidence="2">
        <name>heme b</name>
        <dbReference type="ChEBI" id="CHEBI:60344"/>
    </cofactor>
    <text evidence="2">Binds 2 heme b groups non-covalently.</text>
</comment>
<comment type="subunit">
    <text evidence="2">The cytochrome bc1 complex contains 11 subunits: 3 respiratory subunits (MT-CYB, CYC1 and UQCRFS1), 2 core proteins (UQCRC1 and UQCRC2) and 6 low-molecular weight proteins (UQCRH/QCR6, UQCRB/QCR7, UQCRQ/QCR8, UQCR10/QCR9, UQCR11/QCR10 and a cleavage product of UQCRFS1). This cytochrome bc1 complex then forms a dimer.</text>
</comment>
<comment type="subcellular location">
    <subcellularLocation>
        <location evidence="2">Mitochondrion inner membrane</location>
        <topology evidence="2">Multi-pass membrane protein</topology>
    </subcellularLocation>
</comment>
<comment type="miscellaneous">
    <text evidence="1">Heme 1 (or BL or b562) is low-potential and absorbs at about 562 nm, and heme 2 (or BH or b566) is high-potential and absorbs at about 566 nm.</text>
</comment>
<comment type="similarity">
    <text evidence="3 4">Belongs to the cytochrome b family.</text>
</comment>
<comment type="caution">
    <text evidence="2">The full-length protein contains only eight transmembrane helices, not nine as predicted by bioinformatics tools.</text>
</comment>
<sequence length="379" mass="42545">MTNIRKTHPLMKIINSSFIDLPAPSNISSWWNFGSLLGVCLIIQILTGLFLAMHYTSDTMTAFSSVTHICRDVNYGWLIRYLHANGASMFFICLFLHVGRGLYYGSYMFLETWNIGVLLLFAVMATAFMGYVLPWGQMSFRGATVITNLLSAIPYIGSDLVEWIWGGFSVDKATLTRFFAFHFILPFIIAALAGVHLLFLHETGSNNPSGLSSDADKIPFHPYYTIKDILGVLLLILILTSLVLFSPDMLGDPDNYTPANPLNTPPHIKPEWYFLFAYAILRSIPNKLGGVLALVLSILVLAIIPLLHTSKQRSMMFRPFSQCLFWLLVADLITLTWIGGQPVEHPFIIIGQLASILYFSLILVLMPITSLLENNLLKW</sequence>
<feature type="chain" id="PRO_0000245343" description="Cytochrome b">
    <location>
        <begin position="1"/>
        <end position="379"/>
    </location>
</feature>
<feature type="transmembrane region" description="Helical" evidence="2">
    <location>
        <begin position="33"/>
        <end position="53"/>
    </location>
</feature>
<feature type="transmembrane region" description="Helical" evidence="2">
    <location>
        <begin position="77"/>
        <end position="98"/>
    </location>
</feature>
<feature type="transmembrane region" description="Helical" evidence="2">
    <location>
        <begin position="113"/>
        <end position="133"/>
    </location>
</feature>
<feature type="transmembrane region" description="Helical" evidence="2">
    <location>
        <begin position="178"/>
        <end position="198"/>
    </location>
</feature>
<feature type="transmembrane region" description="Helical" evidence="2">
    <location>
        <begin position="226"/>
        <end position="246"/>
    </location>
</feature>
<feature type="transmembrane region" description="Helical" evidence="2">
    <location>
        <begin position="288"/>
        <end position="308"/>
    </location>
</feature>
<feature type="transmembrane region" description="Helical" evidence="2">
    <location>
        <begin position="320"/>
        <end position="340"/>
    </location>
</feature>
<feature type="transmembrane region" description="Helical" evidence="2">
    <location>
        <begin position="347"/>
        <end position="367"/>
    </location>
</feature>
<feature type="binding site" description="axial binding residue" evidence="2">
    <location>
        <position position="83"/>
    </location>
    <ligand>
        <name>heme b</name>
        <dbReference type="ChEBI" id="CHEBI:60344"/>
        <label>b562</label>
    </ligand>
    <ligandPart>
        <name>Fe</name>
        <dbReference type="ChEBI" id="CHEBI:18248"/>
    </ligandPart>
</feature>
<feature type="binding site" description="axial binding residue" evidence="2">
    <location>
        <position position="97"/>
    </location>
    <ligand>
        <name>heme b</name>
        <dbReference type="ChEBI" id="CHEBI:60344"/>
        <label>b566</label>
    </ligand>
    <ligandPart>
        <name>Fe</name>
        <dbReference type="ChEBI" id="CHEBI:18248"/>
    </ligandPart>
</feature>
<feature type="binding site" description="axial binding residue" evidence="2">
    <location>
        <position position="182"/>
    </location>
    <ligand>
        <name>heme b</name>
        <dbReference type="ChEBI" id="CHEBI:60344"/>
        <label>b562</label>
    </ligand>
    <ligandPart>
        <name>Fe</name>
        <dbReference type="ChEBI" id="CHEBI:18248"/>
    </ligandPart>
</feature>
<feature type="binding site" description="axial binding residue" evidence="2">
    <location>
        <position position="196"/>
    </location>
    <ligand>
        <name>heme b</name>
        <dbReference type="ChEBI" id="CHEBI:60344"/>
        <label>b566</label>
    </ligand>
    <ligandPart>
        <name>Fe</name>
        <dbReference type="ChEBI" id="CHEBI:18248"/>
    </ligandPart>
</feature>
<feature type="binding site" evidence="2">
    <location>
        <position position="201"/>
    </location>
    <ligand>
        <name>a ubiquinone</name>
        <dbReference type="ChEBI" id="CHEBI:16389"/>
    </ligand>
</feature>
<name>CYB_EPIMC</name>
<organism>
    <name type="scientific">Episoriculus macrurus</name>
    <name type="common">Long-tailed mountain shrew</name>
    <dbReference type="NCBI Taxonomy" id="268760"/>
    <lineage>
        <taxon>Eukaryota</taxon>
        <taxon>Metazoa</taxon>
        <taxon>Chordata</taxon>
        <taxon>Craniata</taxon>
        <taxon>Vertebrata</taxon>
        <taxon>Euteleostomi</taxon>
        <taxon>Mammalia</taxon>
        <taxon>Eutheria</taxon>
        <taxon>Laurasiatheria</taxon>
        <taxon>Eulipotyphla</taxon>
        <taxon>Soricidae</taxon>
        <taxon>Soricinae</taxon>
        <taxon>Episoriculus</taxon>
    </lineage>
</organism>
<evidence type="ECO:0000250" key="1"/>
<evidence type="ECO:0000250" key="2">
    <source>
        <dbReference type="UniProtKB" id="P00157"/>
    </source>
</evidence>
<evidence type="ECO:0000255" key="3">
    <source>
        <dbReference type="PROSITE-ProRule" id="PRU00967"/>
    </source>
</evidence>
<evidence type="ECO:0000255" key="4">
    <source>
        <dbReference type="PROSITE-ProRule" id="PRU00968"/>
    </source>
</evidence>